<proteinExistence type="inferred from homology"/>
<gene>
    <name evidence="1" type="primary">ihfA</name>
    <name evidence="1" type="synonym">himA</name>
    <name type="ordered locus">Pfl01_1937</name>
</gene>
<keyword id="KW-0233">DNA recombination</keyword>
<keyword id="KW-0238">DNA-binding</keyword>
<keyword id="KW-0804">Transcription</keyword>
<keyword id="KW-0805">Transcription regulation</keyword>
<keyword id="KW-0810">Translation regulation</keyword>
<comment type="function">
    <text evidence="1">This protein is one of the two subunits of integration host factor, a specific DNA-binding protein that functions in genetic recombination as well as in transcriptional and translational control.</text>
</comment>
<comment type="subunit">
    <text evidence="1">Heterodimer of an alpha and a beta chain.</text>
</comment>
<comment type="similarity">
    <text evidence="1">Belongs to the bacterial histone-like protein family.</text>
</comment>
<reference key="1">
    <citation type="journal article" date="2009" name="Genome Biol.">
        <title>Genomic and genetic analyses of diversity and plant interactions of Pseudomonas fluorescens.</title>
        <authorList>
            <person name="Silby M.W."/>
            <person name="Cerdeno-Tarraga A.M."/>
            <person name="Vernikos G.S."/>
            <person name="Giddens S.R."/>
            <person name="Jackson R.W."/>
            <person name="Preston G.M."/>
            <person name="Zhang X.-X."/>
            <person name="Moon C.D."/>
            <person name="Gehrig S.M."/>
            <person name="Godfrey S.A.C."/>
            <person name="Knight C.G."/>
            <person name="Malone J.G."/>
            <person name="Robinson Z."/>
            <person name="Spiers A.J."/>
            <person name="Harris S."/>
            <person name="Challis G.L."/>
            <person name="Yaxley A.M."/>
            <person name="Harris D."/>
            <person name="Seeger K."/>
            <person name="Murphy L."/>
            <person name="Rutter S."/>
            <person name="Squares R."/>
            <person name="Quail M.A."/>
            <person name="Saunders E."/>
            <person name="Mavromatis K."/>
            <person name="Brettin T.S."/>
            <person name="Bentley S.D."/>
            <person name="Hothersall J."/>
            <person name="Stephens E."/>
            <person name="Thomas C.M."/>
            <person name="Parkhill J."/>
            <person name="Levy S.B."/>
            <person name="Rainey P.B."/>
            <person name="Thomson N.R."/>
        </authorList>
    </citation>
    <scope>NUCLEOTIDE SEQUENCE [LARGE SCALE GENOMIC DNA]</scope>
    <source>
        <strain>Pf0-1</strain>
    </source>
</reference>
<name>IHFA_PSEPF</name>
<accession>Q3KEX6</accession>
<organism>
    <name type="scientific">Pseudomonas fluorescens (strain Pf0-1)</name>
    <dbReference type="NCBI Taxonomy" id="205922"/>
    <lineage>
        <taxon>Bacteria</taxon>
        <taxon>Pseudomonadati</taxon>
        <taxon>Pseudomonadota</taxon>
        <taxon>Gammaproteobacteria</taxon>
        <taxon>Pseudomonadales</taxon>
        <taxon>Pseudomonadaceae</taxon>
        <taxon>Pseudomonas</taxon>
    </lineage>
</organism>
<protein>
    <recommendedName>
        <fullName evidence="1">Integration host factor subunit alpha</fullName>
        <shortName evidence="1">IHF-alpha</shortName>
    </recommendedName>
</protein>
<evidence type="ECO:0000255" key="1">
    <source>
        <dbReference type="HAMAP-Rule" id="MF_00380"/>
    </source>
</evidence>
<evidence type="ECO:0000256" key="2">
    <source>
        <dbReference type="SAM" id="MobiDB-lite"/>
    </source>
</evidence>
<feature type="chain" id="PRO_0000277759" description="Integration host factor subunit alpha">
    <location>
        <begin position="1"/>
        <end position="100"/>
    </location>
</feature>
<feature type="region of interest" description="Disordered" evidence="2">
    <location>
        <begin position="54"/>
        <end position="73"/>
    </location>
</feature>
<sequence>MGALTKAEMAERLYEELGLNKREAKELVELFFEEIRHALEDNEQVKLSGFGNFDLRDKRQRPGRNPKTGEEIPITARRVVTFRPGQKLKARVEAYAGTKS</sequence>
<dbReference type="EMBL" id="CP000094">
    <property type="protein sequence ID" value="ABA73680.1"/>
    <property type="molecule type" value="Genomic_DNA"/>
</dbReference>
<dbReference type="RefSeq" id="WP_002553164.1">
    <property type="nucleotide sequence ID" value="NC_007492.2"/>
</dbReference>
<dbReference type="SMR" id="Q3KEX6"/>
<dbReference type="GeneID" id="98284088"/>
<dbReference type="KEGG" id="pfo:Pfl01_1937"/>
<dbReference type="eggNOG" id="COG0776">
    <property type="taxonomic scope" value="Bacteria"/>
</dbReference>
<dbReference type="HOGENOM" id="CLU_105066_1_3_6"/>
<dbReference type="Proteomes" id="UP000002704">
    <property type="component" value="Chromosome"/>
</dbReference>
<dbReference type="GO" id="GO:0005829">
    <property type="term" value="C:cytosol"/>
    <property type="evidence" value="ECO:0007669"/>
    <property type="project" value="TreeGrafter"/>
</dbReference>
<dbReference type="GO" id="GO:0003677">
    <property type="term" value="F:DNA binding"/>
    <property type="evidence" value="ECO:0007669"/>
    <property type="project" value="UniProtKB-UniRule"/>
</dbReference>
<dbReference type="GO" id="GO:0030527">
    <property type="term" value="F:structural constituent of chromatin"/>
    <property type="evidence" value="ECO:0007669"/>
    <property type="project" value="InterPro"/>
</dbReference>
<dbReference type="GO" id="GO:0006310">
    <property type="term" value="P:DNA recombination"/>
    <property type="evidence" value="ECO:0007669"/>
    <property type="project" value="UniProtKB-UniRule"/>
</dbReference>
<dbReference type="GO" id="GO:0009893">
    <property type="term" value="P:positive regulation of metabolic process"/>
    <property type="evidence" value="ECO:0007669"/>
    <property type="project" value="UniProtKB-ARBA"/>
</dbReference>
<dbReference type="GO" id="GO:0006355">
    <property type="term" value="P:regulation of DNA-templated transcription"/>
    <property type="evidence" value="ECO:0007669"/>
    <property type="project" value="UniProtKB-UniRule"/>
</dbReference>
<dbReference type="GO" id="GO:0006417">
    <property type="term" value="P:regulation of translation"/>
    <property type="evidence" value="ECO:0007669"/>
    <property type="project" value="UniProtKB-UniRule"/>
</dbReference>
<dbReference type="CDD" id="cd13835">
    <property type="entry name" value="IHF_A"/>
    <property type="match status" value="1"/>
</dbReference>
<dbReference type="FunFam" id="4.10.520.10:FF:000002">
    <property type="entry name" value="Integration host factor subunit alpha"/>
    <property type="match status" value="1"/>
</dbReference>
<dbReference type="Gene3D" id="4.10.520.10">
    <property type="entry name" value="IHF-like DNA-binding proteins"/>
    <property type="match status" value="1"/>
</dbReference>
<dbReference type="HAMAP" id="MF_00380">
    <property type="entry name" value="IHF_alpha"/>
    <property type="match status" value="1"/>
</dbReference>
<dbReference type="InterPro" id="IPR000119">
    <property type="entry name" value="Hist_DNA-bd"/>
</dbReference>
<dbReference type="InterPro" id="IPR020816">
    <property type="entry name" value="Histone-like_DNA-bd_CS"/>
</dbReference>
<dbReference type="InterPro" id="IPR010992">
    <property type="entry name" value="IHF-like_DNA-bd_dom_sf"/>
</dbReference>
<dbReference type="InterPro" id="IPR005684">
    <property type="entry name" value="IHF_alpha"/>
</dbReference>
<dbReference type="NCBIfam" id="TIGR00987">
    <property type="entry name" value="himA"/>
    <property type="match status" value="1"/>
</dbReference>
<dbReference type="NCBIfam" id="NF001401">
    <property type="entry name" value="PRK00285.1"/>
    <property type="match status" value="1"/>
</dbReference>
<dbReference type="PANTHER" id="PTHR33175">
    <property type="entry name" value="DNA-BINDING PROTEIN HU"/>
    <property type="match status" value="1"/>
</dbReference>
<dbReference type="PANTHER" id="PTHR33175:SF2">
    <property type="entry name" value="INTEGRATION HOST FACTOR SUBUNIT ALPHA"/>
    <property type="match status" value="1"/>
</dbReference>
<dbReference type="Pfam" id="PF00216">
    <property type="entry name" value="Bac_DNA_binding"/>
    <property type="match status" value="1"/>
</dbReference>
<dbReference type="PRINTS" id="PR01727">
    <property type="entry name" value="DNABINDINGHU"/>
</dbReference>
<dbReference type="SMART" id="SM00411">
    <property type="entry name" value="BHL"/>
    <property type="match status" value="1"/>
</dbReference>
<dbReference type="SUPFAM" id="SSF47729">
    <property type="entry name" value="IHF-like DNA-binding proteins"/>
    <property type="match status" value="1"/>
</dbReference>
<dbReference type="PROSITE" id="PS00045">
    <property type="entry name" value="HISTONE_LIKE"/>
    <property type="match status" value="1"/>
</dbReference>